<dbReference type="EC" id="6.3.2.1" evidence="1"/>
<dbReference type="EMBL" id="CP001649">
    <property type="protein sequence ID" value="ACS79342.1"/>
    <property type="molecule type" value="Genomic_DNA"/>
</dbReference>
<dbReference type="RefSeq" id="WP_015851160.1">
    <property type="nucleotide sequence ID" value="NC_012881.1"/>
</dbReference>
<dbReference type="SMR" id="C6C1U6"/>
<dbReference type="STRING" id="526222.Desal_1279"/>
<dbReference type="KEGG" id="dsa:Desal_1279"/>
<dbReference type="eggNOG" id="COG0414">
    <property type="taxonomic scope" value="Bacteria"/>
</dbReference>
<dbReference type="HOGENOM" id="CLU_047148_0_0_7"/>
<dbReference type="OrthoDB" id="9773087at2"/>
<dbReference type="UniPathway" id="UPA00028">
    <property type="reaction ID" value="UER00005"/>
</dbReference>
<dbReference type="Proteomes" id="UP000002601">
    <property type="component" value="Chromosome"/>
</dbReference>
<dbReference type="GO" id="GO:0005829">
    <property type="term" value="C:cytosol"/>
    <property type="evidence" value="ECO:0007669"/>
    <property type="project" value="TreeGrafter"/>
</dbReference>
<dbReference type="GO" id="GO:0005524">
    <property type="term" value="F:ATP binding"/>
    <property type="evidence" value="ECO:0007669"/>
    <property type="project" value="UniProtKB-KW"/>
</dbReference>
<dbReference type="GO" id="GO:0004592">
    <property type="term" value="F:pantoate-beta-alanine ligase activity"/>
    <property type="evidence" value="ECO:0007669"/>
    <property type="project" value="UniProtKB-UniRule"/>
</dbReference>
<dbReference type="GO" id="GO:0015940">
    <property type="term" value="P:pantothenate biosynthetic process"/>
    <property type="evidence" value="ECO:0007669"/>
    <property type="project" value="UniProtKB-UniRule"/>
</dbReference>
<dbReference type="CDD" id="cd00560">
    <property type="entry name" value="PanC"/>
    <property type="match status" value="1"/>
</dbReference>
<dbReference type="FunFam" id="3.40.50.620:FF:000013">
    <property type="entry name" value="Pantothenate synthetase"/>
    <property type="match status" value="1"/>
</dbReference>
<dbReference type="Gene3D" id="3.40.50.620">
    <property type="entry name" value="HUPs"/>
    <property type="match status" value="1"/>
</dbReference>
<dbReference type="Gene3D" id="3.30.1300.10">
    <property type="entry name" value="Pantoate-beta-alanine ligase, C-terminal domain"/>
    <property type="match status" value="1"/>
</dbReference>
<dbReference type="HAMAP" id="MF_00158">
    <property type="entry name" value="PanC"/>
    <property type="match status" value="1"/>
</dbReference>
<dbReference type="InterPro" id="IPR004821">
    <property type="entry name" value="Cyt_trans-like"/>
</dbReference>
<dbReference type="InterPro" id="IPR003721">
    <property type="entry name" value="Pantoate_ligase"/>
</dbReference>
<dbReference type="InterPro" id="IPR042176">
    <property type="entry name" value="Pantoate_ligase_C"/>
</dbReference>
<dbReference type="InterPro" id="IPR014729">
    <property type="entry name" value="Rossmann-like_a/b/a_fold"/>
</dbReference>
<dbReference type="NCBIfam" id="TIGR00125">
    <property type="entry name" value="cyt_tran_rel"/>
    <property type="match status" value="1"/>
</dbReference>
<dbReference type="NCBIfam" id="TIGR00018">
    <property type="entry name" value="panC"/>
    <property type="match status" value="1"/>
</dbReference>
<dbReference type="PANTHER" id="PTHR21299">
    <property type="entry name" value="CYTIDYLATE KINASE/PANTOATE-BETA-ALANINE LIGASE"/>
    <property type="match status" value="1"/>
</dbReference>
<dbReference type="PANTHER" id="PTHR21299:SF1">
    <property type="entry name" value="PANTOATE--BETA-ALANINE LIGASE"/>
    <property type="match status" value="1"/>
</dbReference>
<dbReference type="Pfam" id="PF02569">
    <property type="entry name" value="Pantoate_ligase"/>
    <property type="match status" value="1"/>
</dbReference>
<dbReference type="SUPFAM" id="SSF52374">
    <property type="entry name" value="Nucleotidylyl transferase"/>
    <property type="match status" value="1"/>
</dbReference>
<evidence type="ECO:0000255" key="1">
    <source>
        <dbReference type="HAMAP-Rule" id="MF_00158"/>
    </source>
</evidence>
<proteinExistence type="inferred from homology"/>
<gene>
    <name evidence="1" type="primary">panC</name>
    <name type="ordered locus">Desal_1279</name>
</gene>
<protein>
    <recommendedName>
        <fullName evidence="1">Pantothenate synthetase</fullName>
        <shortName evidence="1">PS</shortName>
        <ecNumber evidence="1">6.3.2.1</ecNumber>
    </recommendedName>
    <alternativeName>
        <fullName evidence="1">Pantoate--beta-alanine ligase</fullName>
    </alternativeName>
    <alternativeName>
        <fullName evidence="1">Pantoate-activating enzyme</fullName>
    </alternativeName>
</protein>
<accession>C6C1U6</accession>
<comment type="function">
    <text evidence="1">Catalyzes the condensation of pantoate with beta-alanine in an ATP-dependent reaction via a pantoyl-adenylate intermediate.</text>
</comment>
<comment type="catalytic activity">
    <reaction evidence="1">
        <text>(R)-pantoate + beta-alanine + ATP = (R)-pantothenate + AMP + diphosphate + H(+)</text>
        <dbReference type="Rhea" id="RHEA:10912"/>
        <dbReference type="ChEBI" id="CHEBI:15378"/>
        <dbReference type="ChEBI" id="CHEBI:15980"/>
        <dbReference type="ChEBI" id="CHEBI:29032"/>
        <dbReference type="ChEBI" id="CHEBI:30616"/>
        <dbReference type="ChEBI" id="CHEBI:33019"/>
        <dbReference type="ChEBI" id="CHEBI:57966"/>
        <dbReference type="ChEBI" id="CHEBI:456215"/>
        <dbReference type="EC" id="6.3.2.1"/>
    </reaction>
</comment>
<comment type="pathway">
    <text evidence="1">Cofactor biosynthesis; (R)-pantothenate biosynthesis; (R)-pantothenate from (R)-pantoate and beta-alanine: step 1/1.</text>
</comment>
<comment type="subunit">
    <text evidence="1">Homodimer.</text>
</comment>
<comment type="subcellular location">
    <subcellularLocation>
        <location evidence="1">Cytoplasm</location>
    </subcellularLocation>
</comment>
<comment type="miscellaneous">
    <text evidence="1">The reaction proceeds by a bi uni uni bi ping pong mechanism.</text>
</comment>
<comment type="similarity">
    <text evidence="1">Belongs to the pantothenate synthetase family.</text>
</comment>
<feature type="chain" id="PRO_1000203486" description="Pantothenate synthetase">
    <location>
        <begin position="1"/>
        <end position="282"/>
    </location>
</feature>
<feature type="active site" description="Proton donor" evidence="1">
    <location>
        <position position="37"/>
    </location>
</feature>
<feature type="binding site" evidence="1">
    <location>
        <begin position="30"/>
        <end position="37"/>
    </location>
    <ligand>
        <name>ATP</name>
        <dbReference type="ChEBI" id="CHEBI:30616"/>
    </ligand>
</feature>
<feature type="binding site" evidence="1">
    <location>
        <position position="61"/>
    </location>
    <ligand>
        <name>(R)-pantoate</name>
        <dbReference type="ChEBI" id="CHEBI:15980"/>
    </ligand>
</feature>
<feature type="binding site" evidence="1">
    <location>
        <position position="61"/>
    </location>
    <ligand>
        <name>beta-alanine</name>
        <dbReference type="ChEBI" id="CHEBI:57966"/>
    </ligand>
</feature>
<feature type="binding site" evidence="1">
    <location>
        <begin position="147"/>
        <end position="150"/>
    </location>
    <ligand>
        <name>ATP</name>
        <dbReference type="ChEBI" id="CHEBI:30616"/>
    </ligand>
</feature>
<feature type="binding site" evidence="1">
    <location>
        <position position="153"/>
    </location>
    <ligand>
        <name>(R)-pantoate</name>
        <dbReference type="ChEBI" id="CHEBI:15980"/>
    </ligand>
</feature>
<feature type="binding site" evidence="1">
    <location>
        <position position="176"/>
    </location>
    <ligand>
        <name>ATP</name>
        <dbReference type="ChEBI" id="CHEBI:30616"/>
    </ligand>
</feature>
<feature type="binding site" evidence="1">
    <location>
        <begin position="184"/>
        <end position="187"/>
    </location>
    <ligand>
        <name>ATP</name>
        <dbReference type="ChEBI" id="CHEBI:30616"/>
    </ligand>
</feature>
<sequence length="282" mass="31666">METISNPQELQNLCLMLRAEGKKIGLVPTMGYFHEGHLSLMDAARKQCDVLIVSLFVNPTQFGENEDLDAYPHNLERDSELAEKRGVDILFTPIRDDMYFEDHSTWVEVPDLATNLCGKSRPIHFRGVATVVTKLFMTAQPHVAVFGQKDWQQLAIIKRMVRDLNIPVDVQGHEIVREESGLALSSRNVYLTEDEKSVAPNIQKGLQKMRDWVTAGESDAAKLKSDLVEFYAETIPTGRVDYIEIVHPENINILKNVGDSALCAVAIQLGNARLIDNLLIKV</sequence>
<reference key="1">
    <citation type="submission" date="2009-06" db="EMBL/GenBank/DDBJ databases">
        <title>Complete sequence of Desulfovibrio salexigens DSM 2638.</title>
        <authorList>
            <consortium name="US DOE Joint Genome Institute"/>
            <person name="Lucas S."/>
            <person name="Copeland A."/>
            <person name="Lapidus A."/>
            <person name="Glavina del Rio T."/>
            <person name="Tice H."/>
            <person name="Bruce D."/>
            <person name="Goodwin L."/>
            <person name="Pitluck S."/>
            <person name="Munk A.C."/>
            <person name="Brettin T."/>
            <person name="Detter J.C."/>
            <person name="Han C."/>
            <person name="Tapia R."/>
            <person name="Larimer F."/>
            <person name="Land M."/>
            <person name="Hauser L."/>
            <person name="Kyrpides N."/>
            <person name="Anderson I."/>
            <person name="Wall J.D."/>
            <person name="Arkin A.P."/>
            <person name="Dehal P."/>
            <person name="Chivian D."/>
            <person name="Giles B."/>
            <person name="Hazen T.C."/>
        </authorList>
    </citation>
    <scope>NUCLEOTIDE SEQUENCE [LARGE SCALE GENOMIC DNA]</scope>
    <source>
        <strain>ATCC 14822 / DSM 2638 / NCIMB 8403 / VKM B-1763</strain>
    </source>
</reference>
<keyword id="KW-0067">ATP-binding</keyword>
<keyword id="KW-0963">Cytoplasm</keyword>
<keyword id="KW-0436">Ligase</keyword>
<keyword id="KW-0547">Nucleotide-binding</keyword>
<keyword id="KW-0566">Pantothenate biosynthesis</keyword>
<keyword id="KW-1185">Reference proteome</keyword>
<organism>
    <name type="scientific">Maridesulfovibrio salexigens (strain ATCC 14822 / DSM 2638 / NCIMB 8403 / VKM B-1763)</name>
    <name type="common">Desulfovibrio salexigens</name>
    <dbReference type="NCBI Taxonomy" id="526222"/>
    <lineage>
        <taxon>Bacteria</taxon>
        <taxon>Pseudomonadati</taxon>
        <taxon>Thermodesulfobacteriota</taxon>
        <taxon>Desulfovibrionia</taxon>
        <taxon>Desulfovibrionales</taxon>
        <taxon>Desulfovibrionaceae</taxon>
        <taxon>Maridesulfovibrio</taxon>
    </lineage>
</organism>
<name>PANC_MARSD</name>